<keyword id="KW-0007">Acetylation</keyword>
<keyword id="KW-0903">Direct protein sequencing</keyword>
<keyword id="KW-0349">Heme</keyword>
<keyword id="KW-0408">Iron</keyword>
<keyword id="KW-0479">Metal-binding</keyword>
<keyword id="KW-0561">Oxygen transport</keyword>
<keyword id="KW-0597">Phosphoprotein</keyword>
<keyword id="KW-0702">S-nitrosylation</keyword>
<keyword id="KW-0813">Transport</keyword>
<sequence length="146" mass="15759">VHLSDGEKNAISTAWGKVHAAEVGAEALGRLLVVYPWTQRFFDSFGDLSSASAVMGNAKVKAHGKKVIDSFSNGLKHLDNLKGTFASLSELHCDKLHVDPENFKLLGNMIVIVMAHHLGKDFTPEAQAAFQKVVAGVANALAHKYH</sequence>
<evidence type="ECO:0000250" key="1">
    <source>
        <dbReference type="UniProtKB" id="P02086"/>
    </source>
</evidence>
<evidence type="ECO:0000250" key="2">
    <source>
        <dbReference type="UniProtKB" id="P68871"/>
    </source>
</evidence>
<evidence type="ECO:0000255" key="3">
    <source>
        <dbReference type="PROSITE-ProRule" id="PRU00238"/>
    </source>
</evidence>
<organism>
    <name type="scientific">Spermophilus citellus</name>
    <name type="common">European ground squirrel</name>
    <name type="synonym">Citellus citellus</name>
    <dbReference type="NCBI Taxonomy" id="9997"/>
    <lineage>
        <taxon>Eukaryota</taxon>
        <taxon>Metazoa</taxon>
        <taxon>Chordata</taxon>
        <taxon>Craniata</taxon>
        <taxon>Vertebrata</taxon>
        <taxon>Euteleostomi</taxon>
        <taxon>Mammalia</taxon>
        <taxon>Eutheria</taxon>
        <taxon>Euarchontoglires</taxon>
        <taxon>Glires</taxon>
        <taxon>Rodentia</taxon>
        <taxon>Sciuromorpha</taxon>
        <taxon>Sciuridae</taxon>
        <taxon>Xerinae</taxon>
        <taxon>Marmotini</taxon>
        <taxon>Spermophilus</taxon>
    </lineage>
</organism>
<reference key="1">
    <citation type="journal article" date="1986" name="Biol. Chem. Hoppe-Seyler">
        <title>The primary structure of the hemoglobin of the European Souslik (Citellus citellus, Rodentia).</title>
        <authorList>
            <person name="Soskic V."/>
            <person name="Grujic-Injac B."/>
            <person name="Braunitzer G."/>
        </authorList>
    </citation>
    <scope>PROTEIN SEQUENCE</scope>
</reference>
<feature type="chain" id="PRO_0000053111" description="Hemoglobin subunit beta">
    <location>
        <begin position="1"/>
        <end position="146"/>
    </location>
</feature>
<feature type="domain" description="Globin" evidence="3">
    <location>
        <begin position="2"/>
        <end position="146"/>
    </location>
</feature>
<feature type="binding site" description="distal binding residue">
    <location>
        <position position="63"/>
    </location>
    <ligand>
        <name>heme b</name>
        <dbReference type="ChEBI" id="CHEBI:60344"/>
    </ligand>
    <ligandPart>
        <name>Fe</name>
        <dbReference type="ChEBI" id="CHEBI:18248"/>
    </ligandPart>
</feature>
<feature type="binding site" description="proximal binding residue">
    <location>
        <position position="92"/>
    </location>
    <ligand>
        <name>heme b</name>
        <dbReference type="ChEBI" id="CHEBI:60344"/>
    </ligand>
    <ligandPart>
        <name>Fe</name>
        <dbReference type="ChEBI" id="CHEBI:18248"/>
    </ligandPart>
</feature>
<feature type="modified residue" description="N-acetylvaline" evidence="1">
    <location>
        <position position="1"/>
    </location>
</feature>
<feature type="modified residue" description="Phosphoserine" evidence="2">
    <location>
        <position position="44"/>
    </location>
</feature>
<feature type="modified residue" description="N6-acetyllysine" evidence="2">
    <location>
        <position position="59"/>
    </location>
</feature>
<feature type="modified residue" description="N6-acetyllysine" evidence="2">
    <location>
        <position position="82"/>
    </location>
</feature>
<feature type="modified residue" description="S-nitrosocysteine" evidence="2">
    <location>
        <position position="93"/>
    </location>
</feature>
<feature type="modified residue" description="N6-acetyllysine" evidence="2">
    <location>
        <position position="144"/>
    </location>
</feature>
<name>HBB_SPECI</name>
<protein>
    <recommendedName>
        <fullName>Hemoglobin subunit beta</fullName>
    </recommendedName>
    <alternativeName>
        <fullName>Beta-globin</fullName>
    </alternativeName>
    <alternativeName>
        <fullName>Hemoglobin beta chain</fullName>
    </alternativeName>
</protein>
<proteinExistence type="evidence at protein level"/>
<gene>
    <name type="primary">HBB</name>
</gene>
<dbReference type="PIR" id="B25359">
    <property type="entry name" value="B25359"/>
</dbReference>
<dbReference type="SMR" id="P09421"/>
<dbReference type="GO" id="GO:0072562">
    <property type="term" value="C:blood microparticle"/>
    <property type="evidence" value="ECO:0007669"/>
    <property type="project" value="TreeGrafter"/>
</dbReference>
<dbReference type="GO" id="GO:0031838">
    <property type="term" value="C:haptoglobin-hemoglobin complex"/>
    <property type="evidence" value="ECO:0007669"/>
    <property type="project" value="TreeGrafter"/>
</dbReference>
<dbReference type="GO" id="GO:0005833">
    <property type="term" value="C:hemoglobin complex"/>
    <property type="evidence" value="ECO:0007669"/>
    <property type="project" value="InterPro"/>
</dbReference>
<dbReference type="GO" id="GO:0031720">
    <property type="term" value="F:haptoglobin binding"/>
    <property type="evidence" value="ECO:0007669"/>
    <property type="project" value="TreeGrafter"/>
</dbReference>
<dbReference type="GO" id="GO:0020037">
    <property type="term" value="F:heme binding"/>
    <property type="evidence" value="ECO:0007669"/>
    <property type="project" value="InterPro"/>
</dbReference>
<dbReference type="GO" id="GO:0031721">
    <property type="term" value="F:hemoglobin alpha binding"/>
    <property type="evidence" value="ECO:0007669"/>
    <property type="project" value="TreeGrafter"/>
</dbReference>
<dbReference type="GO" id="GO:0046872">
    <property type="term" value="F:metal ion binding"/>
    <property type="evidence" value="ECO:0007669"/>
    <property type="project" value="UniProtKB-KW"/>
</dbReference>
<dbReference type="GO" id="GO:0043177">
    <property type="term" value="F:organic acid binding"/>
    <property type="evidence" value="ECO:0007669"/>
    <property type="project" value="TreeGrafter"/>
</dbReference>
<dbReference type="GO" id="GO:0019825">
    <property type="term" value="F:oxygen binding"/>
    <property type="evidence" value="ECO:0007669"/>
    <property type="project" value="InterPro"/>
</dbReference>
<dbReference type="GO" id="GO:0005344">
    <property type="term" value="F:oxygen carrier activity"/>
    <property type="evidence" value="ECO:0007669"/>
    <property type="project" value="UniProtKB-KW"/>
</dbReference>
<dbReference type="GO" id="GO:0004601">
    <property type="term" value="F:peroxidase activity"/>
    <property type="evidence" value="ECO:0007669"/>
    <property type="project" value="TreeGrafter"/>
</dbReference>
<dbReference type="GO" id="GO:0042744">
    <property type="term" value="P:hydrogen peroxide catabolic process"/>
    <property type="evidence" value="ECO:0007669"/>
    <property type="project" value="TreeGrafter"/>
</dbReference>
<dbReference type="CDD" id="cd08925">
    <property type="entry name" value="Hb-beta-like"/>
    <property type="match status" value="1"/>
</dbReference>
<dbReference type="FunFam" id="1.10.490.10:FF:000001">
    <property type="entry name" value="Hemoglobin subunit beta"/>
    <property type="match status" value="1"/>
</dbReference>
<dbReference type="Gene3D" id="1.10.490.10">
    <property type="entry name" value="Globins"/>
    <property type="match status" value="1"/>
</dbReference>
<dbReference type="InterPro" id="IPR000971">
    <property type="entry name" value="Globin"/>
</dbReference>
<dbReference type="InterPro" id="IPR009050">
    <property type="entry name" value="Globin-like_sf"/>
</dbReference>
<dbReference type="InterPro" id="IPR012292">
    <property type="entry name" value="Globin/Proto"/>
</dbReference>
<dbReference type="InterPro" id="IPR002337">
    <property type="entry name" value="Hemoglobin_b"/>
</dbReference>
<dbReference type="InterPro" id="IPR050056">
    <property type="entry name" value="Hemoglobin_oxygen_transport"/>
</dbReference>
<dbReference type="PANTHER" id="PTHR11442">
    <property type="entry name" value="HEMOGLOBIN FAMILY MEMBER"/>
    <property type="match status" value="1"/>
</dbReference>
<dbReference type="PANTHER" id="PTHR11442:SF42">
    <property type="entry name" value="HEMOGLOBIN SUBUNIT BETA"/>
    <property type="match status" value="1"/>
</dbReference>
<dbReference type="Pfam" id="PF00042">
    <property type="entry name" value="Globin"/>
    <property type="match status" value="1"/>
</dbReference>
<dbReference type="PRINTS" id="PR00814">
    <property type="entry name" value="BETAHAEM"/>
</dbReference>
<dbReference type="SUPFAM" id="SSF46458">
    <property type="entry name" value="Globin-like"/>
    <property type="match status" value="1"/>
</dbReference>
<dbReference type="PROSITE" id="PS01033">
    <property type="entry name" value="GLOBIN"/>
    <property type="match status" value="1"/>
</dbReference>
<comment type="function">
    <text>Involved in oxygen transport from the lung to the various peripheral tissues.</text>
</comment>
<comment type="subunit">
    <text>Heterotetramer of two alpha chains and two beta chains.</text>
</comment>
<comment type="tissue specificity">
    <text>Red blood cells.</text>
</comment>
<comment type="similarity">
    <text evidence="3">Belongs to the globin family.</text>
</comment>
<accession>P09421</accession>